<dbReference type="EC" id="2.7.7.27" evidence="1"/>
<dbReference type="EMBL" id="FM180568">
    <property type="protein sequence ID" value="CAS11224.1"/>
    <property type="molecule type" value="Genomic_DNA"/>
</dbReference>
<dbReference type="RefSeq" id="WP_000253970.1">
    <property type="nucleotide sequence ID" value="NC_011601.1"/>
</dbReference>
<dbReference type="SMR" id="B7UKY7"/>
<dbReference type="KEGG" id="ecg:E2348C_3676"/>
<dbReference type="HOGENOM" id="CLU_029499_14_1_6"/>
<dbReference type="UniPathway" id="UPA00164"/>
<dbReference type="Proteomes" id="UP000008205">
    <property type="component" value="Chromosome"/>
</dbReference>
<dbReference type="GO" id="GO:0005524">
    <property type="term" value="F:ATP binding"/>
    <property type="evidence" value="ECO:0007669"/>
    <property type="project" value="UniProtKB-KW"/>
</dbReference>
<dbReference type="GO" id="GO:0008878">
    <property type="term" value="F:glucose-1-phosphate adenylyltransferase activity"/>
    <property type="evidence" value="ECO:0007669"/>
    <property type="project" value="UniProtKB-UniRule"/>
</dbReference>
<dbReference type="GO" id="GO:0005978">
    <property type="term" value="P:glycogen biosynthetic process"/>
    <property type="evidence" value="ECO:0007669"/>
    <property type="project" value="UniProtKB-UniRule"/>
</dbReference>
<dbReference type="CDD" id="cd02508">
    <property type="entry name" value="ADP_Glucose_PP"/>
    <property type="match status" value="1"/>
</dbReference>
<dbReference type="CDD" id="cd04651">
    <property type="entry name" value="LbH_G1P_AT_C"/>
    <property type="match status" value="1"/>
</dbReference>
<dbReference type="FunFam" id="2.160.10.10:FF:000006">
    <property type="entry name" value="Glucose-1-phosphate adenylyltransferase"/>
    <property type="match status" value="1"/>
</dbReference>
<dbReference type="FunFam" id="3.90.550.10:FF:000014">
    <property type="entry name" value="Glucose-1-phosphate adenylyltransferase"/>
    <property type="match status" value="1"/>
</dbReference>
<dbReference type="Gene3D" id="2.160.10.10">
    <property type="entry name" value="Hexapeptide repeat proteins"/>
    <property type="match status" value="1"/>
</dbReference>
<dbReference type="Gene3D" id="3.90.550.10">
    <property type="entry name" value="Spore Coat Polysaccharide Biosynthesis Protein SpsA, Chain A"/>
    <property type="match status" value="1"/>
</dbReference>
<dbReference type="HAMAP" id="MF_00624">
    <property type="entry name" value="GlgC"/>
    <property type="match status" value="1"/>
</dbReference>
<dbReference type="InterPro" id="IPR011831">
    <property type="entry name" value="ADP-Glc_PPase"/>
</dbReference>
<dbReference type="InterPro" id="IPR005836">
    <property type="entry name" value="ADP_Glu_pyroP_CS"/>
</dbReference>
<dbReference type="InterPro" id="IPR023049">
    <property type="entry name" value="GlgC_bac"/>
</dbReference>
<dbReference type="InterPro" id="IPR056818">
    <property type="entry name" value="GlmU/GlgC-like_hexapep"/>
</dbReference>
<dbReference type="InterPro" id="IPR005835">
    <property type="entry name" value="NTP_transferase_dom"/>
</dbReference>
<dbReference type="InterPro" id="IPR029044">
    <property type="entry name" value="Nucleotide-diphossugar_trans"/>
</dbReference>
<dbReference type="InterPro" id="IPR011004">
    <property type="entry name" value="Trimer_LpxA-like_sf"/>
</dbReference>
<dbReference type="NCBIfam" id="TIGR02091">
    <property type="entry name" value="glgC"/>
    <property type="match status" value="1"/>
</dbReference>
<dbReference type="NCBIfam" id="NF001947">
    <property type="entry name" value="PRK00725.1"/>
    <property type="match status" value="1"/>
</dbReference>
<dbReference type="NCBIfam" id="NF002023">
    <property type="entry name" value="PRK00844.1"/>
    <property type="match status" value="1"/>
</dbReference>
<dbReference type="PANTHER" id="PTHR43523:SF2">
    <property type="entry name" value="GLUCOSE-1-PHOSPHATE ADENYLYLTRANSFERASE"/>
    <property type="match status" value="1"/>
</dbReference>
<dbReference type="PANTHER" id="PTHR43523">
    <property type="entry name" value="GLUCOSE-1-PHOSPHATE ADENYLYLTRANSFERASE-RELATED"/>
    <property type="match status" value="1"/>
</dbReference>
<dbReference type="Pfam" id="PF24894">
    <property type="entry name" value="Hexapep_GlmU"/>
    <property type="match status" value="1"/>
</dbReference>
<dbReference type="Pfam" id="PF00483">
    <property type="entry name" value="NTP_transferase"/>
    <property type="match status" value="1"/>
</dbReference>
<dbReference type="SUPFAM" id="SSF53448">
    <property type="entry name" value="Nucleotide-diphospho-sugar transferases"/>
    <property type="match status" value="1"/>
</dbReference>
<dbReference type="SUPFAM" id="SSF51161">
    <property type="entry name" value="Trimeric LpxA-like enzymes"/>
    <property type="match status" value="1"/>
</dbReference>
<dbReference type="PROSITE" id="PS00808">
    <property type="entry name" value="ADP_GLC_PYROPHOSPH_1"/>
    <property type="match status" value="1"/>
</dbReference>
<dbReference type="PROSITE" id="PS00809">
    <property type="entry name" value="ADP_GLC_PYROPHOSPH_2"/>
    <property type="match status" value="1"/>
</dbReference>
<dbReference type="PROSITE" id="PS00810">
    <property type="entry name" value="ADP_GLC_PYROPHOSPH_3"/>
    <property type="match status" value="1"/>
</dbReference>
<organism>
    <name type="scientific">Escherichia coli O127:H6 (strain E2348/69 / EPEC)</name>
    <dbReference type="NCBI Taxonomy" id="574521"/>
    <lineage>
        <taxon>Bacteria</taxon>
        <taxon>Pseudomonadati</taxon>
        <taxon>Pseudomonadota</taxon>
        <taxon>Gammaproteobacteria</taxon>
        <taxon>Enterobacterales</taxon>
        <taxon>Enterobacteriaceae</taxon>
        <taxon>Escherichia</taxon>
    </lineage>
</organism>
<name>GLGC_ECO27</name>
<keyword id="KW-0021">Allosteric enzyme</keyword>
<keyword id="KW-0067">ATP-binding</keyword>
<keyword id="KW-0119">Carbohydrate metabolism</keyword>
<keyword id="KW-0320">Glycogen biosynthesis</keyword>
<keyword id="KW-0321">Glycogen metabolism</keyword>
<keyword id="KW-0547">Nucleotide-binding</keyword>
<keyword id="KW-0548">Nucleotidyltransferase</keyword>
<keyword id="KW-1185">Reference proteome</keyword>
<keyword id="KW-0808">Transferase</keyword>
<gene>
    <name evidence="1" type="primary">glgC</name>
    <name type="ordered locus">E2348C_3676</name>
</gene>
<reference key="1">
    <citation type="journal article" date="2009" name="J. Bacteriol.">
        <title>Complete genome sequence and comparative genome analysis of enteropathogenic Escherichia coli O127:H6 strain E2348/69.</title>
        <authorList>
            <person name="Iguchi A."/>
            <person name="Thomson N.R."/>
            <person name="Ogura Y."/>
            <person name="Saunders D."/>
            <person name="Ooka T."/>
            <person name="Henderson I.R."/>
            <person name="Harris D."/>
            <person name="Asadulghani M."/>
            <person name="Kurokawa K."/>
            <person name="Dean P."/>
            <person name="Kenny B."/>
            <person name="Quail M.A."/>
            <person name="Thurston S."/>
            <person name="Dougan G."/>
            <person name="Hayashi T."/>
            <person name="Parkhill J."/>
            <person name="Frankel G."/>
        </authorList>
    </citation>
    <scope>NUCLEOTIDE SEQUENCE [LARGE SCALE GENOMIC DNA]</scope>
    <source>
        <strain>E2348/69 / EPEC</strain>
    </source>
</reference>
<comment type="function">
    <text evidence="1">Involved in the biosynthesis of ADP-glucose, a building block required for the elongation reactions to produce glycogen. Catalyzes the reaction between ATP and alpha-D-glucose 1-phosphate (G1P) to produce pyrophosphate and ADP-Glc.</text>
</comment>
<comment type="catalytic activity">
    <reaction evidence="1">
        <text>alpha-D-glucose 1-phosphate + ATP + H(+) = ADP-alpha-D-glucose + diphosphate</text>
        <dbReference type="Rhea" id="RHEA:12120"/>
        <dbReference type="ChEBI" id="CHEBI:15378"/>
        <dbReference type="ChEBI" id="CHEBI:30616"/>
        <dbReference type="ChEBI" id="CHEBI:33019"/>
        <dbReference type="ChEBI" id="CHEBI:57498"/>
        <dbReference type="ChEBI" id="CHEBI:58601"/>
        <dbReference type="EC" id="2.7.7.27"/>
    </reaction>
</comment>
<comment type="activity regulation">
    <text evidence="1">Allosterically activated by fructose-1,6-bisphosphate (F16BP) and inhibited by AMP.</text>
</comment>
<comment type="pathway">
    <text evidence="1">Glycan biosynthesis; glycogen biosynthesis.</text>
</comment>
<comment type="subunit">
    <text evidence="1">Homotetramer.</text>
</comment>
<comment type="similarity">
    <text evidence="1">Belongs to the bacterial/plant glucose-1-phosphate adenylyltransferase family.</text>
</comment>
<sequence length="431" mass="48679">MVSLEKNDHLMLARQLPLKSVALILAGGRGTRLKDLTNKRAKPAVHFGGKFRIIDFALSNCINSGIRRMGVITQYQSHTLVQHIQRGWSFFNEEMNEFVDLLPAQQRMKGENWYRGTADAVTQNLDIIRRYKAEYVVILAGDHIYKQDYSHMLIDHVEKGARCTVACMPVPIEEASAFGVMAVDENDKIIEFVEKPANPPSMPNDPSKSLASMGIYVFDADYLYELLEEDDRDENSSHDFGKDLIPKITEAGLAYAHPFPLSCVQSDPDAEPYWRDVGTLEAYWKANLDLASVVPELDMYDRNWPIRTYNESLPPAKFVQDRSGSHGMTLNSLVSGGCVISGSVVVQSVLFSRVRVNSFCNIDSAVLLPEVWVGRSCRLRRCVIDRACVIPEGMVIGENAEEDARRFYRSEEGIVLVTREMLRKLGHKQER</sequence>
<evidence type="ECO:0000255" key="1">
    <source>
        <dbReference type="HAMAP-Rule" id="MF_00624"/>
    </source>
</evidence>
<proteinExistence type="inferred from homology"/>
<accession>B7UKY7</accession>
<feature type="chain" id="PRO_1000147226" description="Glucose-1-phosphate adenylyltransferase">
    <location>
        <begin position="1"/>
        <end position="431"/>
    </location>
</feature>
<feature type="binding site" evidence="1">
    <location>
        <position position="39"/>
    </location>
    <ligand>
        <name>beta-D-fructose 1,6-bisphosphate</name>
        <dbReference type="ChEBI" id="CHEBI:32966"/>
    </ligand>
</feature>
<feature type="binding site" evidence="1">
    <location>
        <position position="40"/>
    </location>
    <ligand>
        <name>AMP</name>
        <dbReference type="ChEBI" id="CHEBI:456215"/>
    </ligand>
</feature>
<feature type="binding site" evidence="1">
    <location>
        <position position="46"/>
    </location>
    <ligand>
        <name>AMP</name>
        <dbReference type="ChEBI" id="CHEBI:456215"/>
    </ligand>
</feature>
<feature type="binding site" evidence="1">
    <location>
        <position position="52"/>
    </location>
    <ligand>
        <name>AMP</name>
        <dbReference type="ChEBI" id="CHEBI:456215"/>
    </ligand>
</feature>
<feature type="binding site" evidence="1">
    <location>
        <position position="114"/>
    </location>
    <ligand>
        <name>alpha-D-glucose 1-phosphate</name>
        <dbReference type="ChEBI" id="CHEBI:58601"/>
    </ligand>
</feature>
<feature type="binding site" evidence="1">
    <location>
        <position position="130"/>
    </location>
    <ligand>
        <name>AMP</name>
        <dbReference type="ChEBI" id="CHEBI:456215"/>
    </ligand>
</feature>
<feature type="binding site" evidence="1">
    <location>
        <position position="179"/>
    </location>
    <ligand>
        <name>alpha-D-glucose 1-phosphate</name>
        <dbReference type="ChEBI" id="CHEBI:58601"/>
    </ligand>
</feature>
<feature type="binding site" evidence="1">
    <location>
        <begin position="194"/>
        <end position="195"/>
    </location>
    <ligand>
        <name>alpha-D-glucose 1-phosphate</name>
        <dbReference type="ChEBI" id="CHEBI:58601"/>
    </ligand>
</feature>
<feature type="binding site" evidence="1">
    <location>
        <position position="212"/>
    </location>
    <ligand>
        <name>alpha-D-glucose 1-phosphate</name>
        <dbReference type="ChEBI" id="CHEBI:58601"/>
    </ligand>
</feature>
<feature type="binding site" evidence="1">
    <location>
        <position position="370"/>
    </location>
    <ligand>
        <name>AMP</name>
        <dbReference type="ChEBI" id="CHEBI:456215"/>
    </ligand>
</feature>
<feature type="binding site" evidence="1">
    <location>
        <position position="386"/>
    </location>
    <ligand>
        <name>AMP</name>
        <dbReference type="ChEBI" id="CHEBI:456215"/>
    </ligand>
</feature>
<feature type="binding site" evidence="1">
    <location>
        <begin position="419"/>
        <end position="423"/>
    </location>
    <ligand>
        <name>beta-D-fructose 1,6-bisphosphate</name>
        <dbReference type="ChEBI" id="CHEBI:32966"/>
    </ligand>
</feature>
<feature type="binding site" evidence="1">
    <location>
        <begin position="429"/>
        <end position="431"/>
    </location>
    <ligand>
        <name>beta-D-fructose 1,6-bisphosphate</name>
        <dbReference type="ChEBI" id="CHEBI:32966"/>
    </ligand>
</feature>
<feature type="site" description="Could play a key role in the communication between the regulatory and the substrate sites" evidence="1">
    <location>
        <position position="74"/>
    </location>
</feature>
<feature type="site" description="Could play a key role in the communication between the regulatory and the substrate sites" evidence="1">
    <location>
        <position position="113"/>
    </location>
</feature>
<protein>
    <recommendedName>
        <fullName evidence="1">Glucose-1-phosphate adenylyltransferase</fullName>
        <ecNumber evidence="1">2.7.7.27</ecNumber>
    </recommendedName>
    <alternativeName>
        <fullName evidence="1">ADP-glucose pyrophosphorylase</fullName>
        <shortName evidence="1">ADPGlc PPase</shortName>
    </alternativeName>
    <alternativeName>
        <fullName evidence="1">ADP-glucose synthase</fullName>
    </alternativeName>
</protein>